<comment type="function">
    <text evidence="1">Key component of the proton channel; it plays a direct role in the translocation of protons across the membrane.</text>
</comment>
<comment type="subunit">
    <text evidence="1">F-type ATPases have 2 components, CF(1) - the catalytic core - and CF(0) - the membrane proton channel. CF(1) has five subunits: alpha(3), beta(3), gamma(1), delta(1), epsilon(1). CF(0) has three main subunits: a(1), b(2) and c(9-12). The alpha and beta chains form an alternating ring which encloses part of the gamma chain. CF(1) is attached to CF(0) by a central stalk formed by the gamma and epsilon chains, while a peripheral stalk is formed by the delta and b chains.</text>
</comment>
<comment type="subcellular location">
    <subcellularLocation>
        <location evidence="1">Cell inner membrane</location>
        <topology evidence="1">Multi-pass membrane protein</topology>
    </subcellularLocation>
</comment>
<comment type="similarity">
    <text evidence="1">Belongs to the ATPase A chain family.</text>
</comment>
<reference key="1">
    <citation type="journal article" date="2008" name="PLoS ONE">
        <title>Comparative analysis of Acinetobacters: three genomes for three lifestyles.</title>
        <authorList>
            <person name="Vallenet D."/>
            <person name="Nordmann P."/>
            <person name="Barbe V."/>
            <person name="Poirel L."/>
            <person name="Mangenot S."/>
            <person name="Bataille E."/>
            <person name="Dossat C."/>
            <person name="Gas S."/>
            <person name="Kreimeyer A."/>
            <person name="Lenoble P."/>
            <person name="Oztas S."/>
            <person name="Poulain J."/>
            <person name="Segurens B."/>
            <person name="Robert C."/>
            <person name="Abergel C."/>
            <person name="Claverie J.-M."/>
            <person name="Raoult D."/>
            <person name="Medigue C."/>
            <person name="Weissenbach J."/>
            <person name="Cruveiller S."/>
        </authorList>
    </citation>
    <scope>NUCLEOTIDE SEQUENCE [LARGE SCALE GENOMIC DNA]</scope>
    <source>
        <strain>SDF</strain>
    </source>
</reference>
<organism>
    <name type="scientific">Acinetobacter baumannii (strain SDF)</name>
    <dbReference type="NCBI Taxonomy" id="509170"/>
    <lineage>
        <taxon>Bacteria</taxon>
        <taxon>Pseudomonadati</taxon>
        <taxon>Pseudomonadota</taxon>
        <taxon>Gammaproteobacteria</taxon>
        <taxon>Moraxellales</taxon>
        <taxon>Moraxellaceae</taxon>
        <taxon>Acinetobacter</taxon>
        <taxon>Acinetobacter calcoaceticus/baumannii complex</taxon>
    </lineage>
</organism>
<feature type="chain" id="PRO_0000362221" description="ATP synthase subunit a">
    <location>
        <begin position="1"/>
        <end position="291"/>
    </location>
</feature>
<feature type="transmembrane region" description="Helical" evidence="1">
    <location>
        <begin position="50"/>
        <end position="70"/>
    </location>
</feature>
<feature type="transmembrane region" description="Helical" evidence="1">
    <location>
        <begin position="108"/>
        <end position="128"/>
    </location>
</feature>
<feature type="transmembrane region" description="Helical" evidence="1">
    <location>
        <begin position="161"/>
        <end position="181"/>
    </location>
</feature>
<feature type="transmembrane region" description="Helical" evidence="1">
    <location>
        <begin position="203"/>
        <end position="223"/>
    </location>
</feature>
<feature type="transmembrane region" description="Helical" evidence="1">
    <location>
        <begin position="241"/>
        <end position="261"/>
    </location>
</feature>
<feature type="transmembrane region" description="Helical" evidence="1">
    <location>
        <begin position="262"/>
        <end position="282"/>
    </location>
</feature>
<keyword id="KW-0066">ATP synthesis</keyword>
<keyword id="KW-0997">Cell inner membrane</keyword>
<keyword id="KW-1003">Cell membrane</keyword>
<keyword id="KW-0138">CF(0)</keyword>
<keyword id="KW-0375">Hydrogen ion transport</keyword>
<keyword id="KW-0406">Ion transport</keyword>
<keyword id="KW-0472">Membrane</keyword>
<keyword id="KW-0812">Transmembrane</keyword>
<keyword id="KW-1133">Transmembrane helix</keyword>
<keyword id="KW-0813">Transport</keyword>
<proteinExistence type="inferred from homology"/>
<accession>B0VNJ8</accession>
<sequence>MAAEEHALTSPEYIKHHLTNMTYGKMPDGTWKLAETAEEAHSMGFTAIHLDSMGWSIGLGVIFCLLFWIVARAANAGVPTKFQSAIEMIIEFVDSSVRDTFHGKSRLIAPLALTIFVWIFLMNLMDLIPVDWIPQVAAFVGANAFGMDPHHVYFKIVPSTDPNITLGMSLSVFVLILFYSIREKGVGGFVGELALNPFNPSNPVAKALLIPVNLILELVTFLARPISLALRLFGNMYAGELIFILIALLPFWIQWALSVPWAIFHILVITLQAFIFMMLTIVYLSMASEKH</sequence>
<evidence type="ECO:0000255" key="1">
    <source>
        <dbReference type="HAMAP-Rule" id="MF_01393"/>
    </source>
</evidence>
<gene>
    <name evidence="1" type="primary">atpB</name>
    <name type="ordered locus">ABSDF0163</name>
</gene>
<dbReference type="EMBL" id="CU468230">
    <property type="protein sequence ID" value="CAO99568.1"/>
    <property type="molecule type" value="Genomic_DNA"/>
</dbReference>
<dbReference type="SMR" id="B0VNJ8"/>
<dbReference type="KEGG" id="abm:ABSDF0163"/>
<dbReference type="HOGENOM" id="CLU_041018_1_0_6"/>
<dbReference type="Proteomes" id="UP000001741">
    <property type="component" value="Chromosome"/>
</dbReference>
<dbReference type="GO" id="GO:0005886">
    <property type="term" value="C:plasma membrane"/>
    <property type="evidence" value="ECO:0007669"/>
    <property type="project" value="UniProtKB-SubCell"/>
</dbReference>
<dbReference type="GO" id="GO:0045259">
    <property type="term" value="C:proton-transporting ATP synthase complex"/>
    <property type="evidence" value="ECO:0007669"/>
    <property type="project" value="UniProtKB-KW"/>
</dbReference>
<dbReference type="GO" id="GO:0046933">
    <property type="term" value="F:proton-transporting ATP synthase activity, rotational mechanism"/>
    <property type="evidence" value="ECO:0007669"/>
    <property type="project" value="UniProtKB-UniRule"/>
</dbReference>
<dbReference type="GO" id="GO:0042777">
    <property type="term" value="P:proton motive force-driven plasma membrane ATP synthesis"/>
    <property type="evidence" value="ECO:0007669"/>
    <property type="project" value="TreeGrafter"/>
</dbReference>
<dbReference type="CDD" id="cd00310">
    <property type="entry name" value="ATP-synt_Fo_a_6"/>
    <property type="match status" value="1"/>
</dbReference>
<dbReference type="FunFam" id="1.20.120.220:FF:000002">
    <property type="entry name" value="ATP synthase subunit a"/>
    <property type="match status" value="1"/>
</dbReference>
<dbReference type="Gene3D" id="1.20.120.220">
    <property type="entry name" value="ATP synthase, F0 complex, subunit A"/>
    <property type="match status" value="1"/>
</dbReference>
<dbReference type="HAMAP" id="MF_01393">
    <property type="entry name" value="ATP_synth_a_bact"/>
    <property type="match status" value="1"/>
</dbReference>
<dbReference type="InterPro" id="IPR045082">
    <property type="entry name" value="ATP_syn_F0_a_bact/chloroplast"/>
</dbReference>
<dbReference type="InterPro" id="IPR000568">
    <property type="entry name" value="ATP_synth_F0_asu"/>
</dbReference>
<dbReference type="InterPro" id="IPR023011">
    <property type="entry name" value="ATP_synth_F0_asu_AS"/>
</dbReference>
<dbReference type="InterPro" id="IPR035908">
    <property type="entry name" value="F0_ATP_A_sf"/>
</dbReference>
<dbReference type="NCBIfam" id="TIGR01131">
    <property type="entry name" value="ATP_synt_6_or_A"/>
    <property type="match status" value="1"/>
</dbReference>
<dbReference type="NCBIfam" id="NF004477">
    <property type="entry name" value="PRK05815.1-1"/>
    <property type="match status" value="1"/>
</dbReference>
<dbReference type="PANTHER" id="PTHR42823">
    <property type="entry name" value="ATP SYNTHASE SUBUNIT A, CHLOROPLASTIC"/>
    <property type="match status" value="1"/>
</dbReference>
<dbReference type="PANTHER" id="PTHR42823:SF3">
    <property type="entry name" value="ATP SYNTHASE SUBUNIT A, CHLOROPLASTIC"/>
    <property type="match status" value="1"/>
</dbReference>
<dbReference type="Pfam" id="PF00119">
    <property type="entry name" value="ATP-synt_A"/>
    <property type="match status" value="1"/>
</dbReference>
<dbReference type="SUPFAM" id="SSF81336">
    <property type="entry name" value="F1F0 ATP synthase subunit A"/>
    <property type="match status" value="1"/>
</dbReference>
<dbReference type="PROSITE" id="PS00449">
    <property type="entry name" value="ATPASE_A"/>
    <property type="match status" value="1"/>
</dbReference>
<name>ATP6_ACIBS</name>
<protein>
    <recommendedName>
        <fullName evidence="1">ATP synthase subunit a</fullName>
    </recommendedName>
    <alternativeName>
        <fullName evidence="1">ATP synthase F0 sector subunit a</fullName>
    </alternativeName>
    <alternativeName>
        <fullName evidence="1">F-ATPase subunit 6</fullName>
    </alternativeName>
</protein>